<accession>Q9A4C3</accession>
<comment type="function">
    <text evidence="1">Catalyzes the oxidation of L-aspartate to iminoaspartate, the first step in the de novo biosynthesis of NAD(+).</text>
</comment>
<comment type="catalytic activity">
    <reaction evidence="1">
        <text>L-aspartate + O2 = iminosuccinate + H2O2</text>
        <dbReference type="Rhea" id="RHEA:25876"/>
        <dbReference type="ChEBI" id="CHEBI:15379"/>
        <dbReference type="ChEBI" id="CHEBI:16240"/>
        <dbReference type="ChEBI" id="CHEBI:29991"/>
        <dbReference type="ChEBI" id="CHEBI:77875"/>
        <dbReference type="EC" id="1.4.3.16"/>
    </reaction>
    <physiologicalReaction direction="left-to-right" evidence="1">
        <dbReference type="Rhea" id="RHEA:25877"/>
    </physiologicalReaction>
</comment>
<comment type="cofactor">
    <cofactor evidence="1">
        <name>FAD</name>
        <dbReference type="ChEBI" id="CHEBI:57692"/>
    </cofactor>
    <text evidence="1">Binds 1 FAD per subunit.</text>
</comment>
<comment type="pathway">
    <text evidence="1">Cofactor biosynthesis; NAD(+) biosynthesis; iminoaspartate from L-aspartate (oxidase route): step 1/1.</text>
</comment>
<comment type="subcellular location">
    <subcellularLocation>
        <location evidence="1">Cytoplasm</location>
    </subcellularLocation>
</comment>
<comment type="similarity">
    <text evidence="2">Belongs to the FAD-dependent oxidoreductase 2 family. NadB subfamily.</text>
</comment>
<reference key="1">
    <citation type="journal article" date="2001" name="Proc. Natl. Acad. Sci. U.S.A.">
        <title>Complete genome sequence of Caulobacter crescentus.</title>
        <authorList>
            <person name="Nierman W.C."/>
            <person name="Feldblyum T.V."/>
            <person name="Laub M.T."/>
            <person name="Paulsen I.T."/>
            <person name="Nelson K.E."/>
            <person name="Eisen J.A."/>
            <person name="Heidelberg J.F."/>
            <person name="Alley M.R.K."/>
            <person name="Ohta N."/>
            <person name="Maddock J.R."/>
            <person name="Potocka I."/>
            <person name="Nelson W.C."/>
            <person name="Newton A."/>
            <person name="Stephens C."/>
            <person name="Phadke N.D."/>
            <person name="Ely B."/>
            <person name="DeBoy R.T."/>
            <person name="Dodson R.J."/>
            <person name="Durkin A.S."/>
            <person name="Gwinn M.L."/>
            <person name="Haft D.H."/>
            <person name="Kolonay J.F."/>
            <person name="Smit J."/>
            <person name="Craven M.B."/>
            <person name="Khouri H.M."/>
            <person name="Shetty J."/>
            <person name="Berry K.J."/>
            <person name="Utterback T.R."/>
            <person name="Tran K."/>
            <person name="Wolf A.M."/>
            <person name="Vamathevan J.J."/>
            <person name="Ermolaeva M.D."/>
            <person name="White O."/>
            <person name="Salzberg S.L."/>
            <person name="Venter J.C."/>
            <person name="Shapiro L."/>
            <person name="Fraser C.M."/>
        </authorList>
    </citation>
    <scope>NUCLEOTIDE SEQUENCE [LARGE SCALE GENOMIC DNA]</scope>
    <source>
        <strain>ATCC 19089 / CIP 103742 / CB 15</strain>
    </source>
</reference>
<name>NADB_CAUVC</name>
<evidence type="ECO:0000250" key="1">
    <source>
        <dbReference type="UniProtKB" id="P10902"/>
    </source>
</evidence>
<evidence type="ECO:0000305" key="2"/>
<organism>
    <name type="scientific">Caulobacter vibrioides (strain ATCC 19089 / CIP 103742 / CB 15)</name>
    <name type="common">Caulobacter crescentus</name>
    <dbReference type="NCBI Taxonomy" id="190650"/>
    <lineage>
        <taxon>Bacteria</taxon>
        <taxon>Pseudomonadati</taxon>
        <taxon>Pseudomonadota</taxon>
        <taxon>Alphaproteobacteria</taxon>
        <taxon>Caulobacterales</taxon>
        <taxon>Caulobacteraceae</taxon>
        <taxon>Caulobacter</taxon>
    </lineage>
</organism>
<sequence>MTQYRITFEGPVILGAGLAGLTAALSATTGAAKTALVLSPTPLASGCSSAWAQGGMAAALSGDDSPALHAADTIAAGAGLCDPQAVDLLTREGPQAVRDLAALGAPFDRKADDGFVLSLEAAHSAARVARVGGDGAGAAIMAAVIAAVRATPGIEVRENARARRLLQDANGRVVGVLADVDGALVEIRSTAVILATGGVGGLYAVTTTPAQVRGEGLGLAALAGAMIADPEFVQFHPTAIDIGRDPAPLATEALRGEGAILRNADGKAFMADYHPAKELAPRDVVARALHAERAAGRGAFLDATAAVGAHFPHEFPAVFEACMSAGIDPRRQMIPVTPAVHYHMGGVATDLDGRASLPGLYAAGECASTGVQGANRLASNSLLEAAVFGARAGRAAAAEGATGGPPVSLEPLPDLPDAALQGLRKAMSRDAGVIRDADGLTRLLGEIETLEAGHGQGPILVAARLIVTAALAREESRGGHCRIDFPATDPVGVRTFVTLDGREPGLRYAAE</sequence>
<protein>
    <recommendedName>
        <fullName evidence="1">L-aspartate oxidase</fullName>
        <shortName evidence="1">LASPO</shortName>
        <ecNumber evidence="1">1.4.3.16</ecNumber>
    </recommendedName>
    <alternativeName>
        <fullName>Quinolinate synthase B</fullName>
    </alternativeName>
</protein>
<feature type="chain" id="PRO_0000184381" description="L-aspartate oxidase">
    <location>
        <begin position="1"/>
        <end position="511"/>
    </location>
</feature>
<feature type="active site" description="Proton donor/acceptor" evidence="1">
    <location>
        <position position="282"/>
    </location>
</feature>
<feature type="binding site" evidence="1">
    <location>
        <begin position="16"/>
        <end position="19"/>
    </location>
    <ligand>
        <name>FAD</name>
        <dbReference type="ChEBI" id="CHEBI:57692"/>
    </ligand>
</feature>
<feature type="binding site" evidence="1">
    <location>
        <begin position="48"/>
        <end position="55"/>
    </location>
    <ligand>
        <name>FAD</name>
        <dbReference type="ChEBI" id="CHEBI:57692"/>
    </ligand>
</feature>
<feature type="binding site" evidence="1">
    <location>
        <position position="365"/>
    </location>
    <ligand>
        <name>FAD</name>
        <dbReference type="ChEBI" id="CHEBI:57692"/>
    </ligand>
</feature>
<feature type="binding site" evidence="1">
    <location>
        <begin position="381"/>
        <end position="382"/>
    </location>
    <ligand>
        <name>FAD</name>
        <dbReference type="ChEBI" id="CHEBI:57692"/>
    </ligand>
</feature>
<feature type="site" description="Important in orienting the L-aspartate substrate" evidence="1">
    <location>
        <position position="120"/>
    </location>
</feature>
<gene>
    <name type="primary">nadB</name>
    <name type="ordered locus">CC_2913</name>
</gene>
<proteinExistence type="inferred from homology"/>
<dbReference type="EC" id="1.4.3.16" evidence="1"/>
<dbReference type="EMBL" id="AE005673">
    <property type="protein sequence ID" value="AAK24875.1"/>
    <property type="molecule type" value="Genomic_DNA"/>
</dbReference>
<dbReference type="PIR" id="G87609">
    <property type="entry name" value="G87609"/>
</dbReference>
<dbReference type="RefSeq" id="NP_421707.1">
    <property type="nucleotide sequence ID" value="NC_002696.2"/>
</dbReference>
<dbReference type="RefSeq" id="WP_010920751.1">
    <property type="nucleotide sequence ID" value="NC_002696.2"/>
</dbReference>
<dbReference type="SMR" id="Q9A4C3"/>
<dbReference type="STRING" id="190650.CC_2913"/>
<dbReference type="EnsemblBacteria" id="AAK24875">
    <property type="protein sequence ID" value="AAK24875"/>
    <property type="gene ID" value="CC_2913"/>
</dbReference>
<dbReference type="KEGG" id="ccr:CC_2913"/>
<dbReference type="PATRIC" id="fig|190650.5.peg.2918"/>
<dbReference type="eggNOG" id="COG0029">
    <property type="taxonomic scope" value="Bacteria"/>
</dbReference>
<dbReference type="HOGENOM" id="CLU_014312_3_2_5"/>
<dbReference type="BioCyc" id="CAULO:CC2913-MONOMER"/>
<dbReference type="UniPathway" id="UPA00253">
    <property type="reaction ID" value="UER00326"/>
</dbReference>
<dbReference type="Proteomes" id="UP000001816">
    <property type="component" value="Chromosome"/>
</dbReference>
<dbReference type="GO" id="GO:0005737">
    <property type="term" value="C:cytoplasm"/>
    <property type="evidence" value="ECO:0007669"/>
    <property type="project" value="UniProtKB-SubCell"/>
</dbReference>
<dbReference type="GO" id="GO:0008734">
    <property type="term" value="F:L-aspartate oxidase activity"/>
    <property type="evidence" value="ECO:0007669"/>
    <property type="project" value="UniProtKB-EC"/>
</dbReference>
<dbReference type="GO" id="GO:0000166">
    <property type="term" value="F:nucleotide binding"/>
    <property type="evidence" value="ECO:0007669"/>
    <property type="project" value="UniProtKB-KW"/>
</dbReference>
<dbReference type="GO" id="GO:0034628">
    <property type="term" value="P:'de novo' NAD biosynthetic process from L-aspartate"/>
    <property type="evidence" value="ECO:0007669"/>
    <property type="project" value="TreeGrafter"/>
</dbReference>
<dbReference type="FunFam" id="3.90.700.10:FF:000002">
    <property type="entry name" value="L-aspartate oxidase"/>
    <property type="match status" value="1"/>
</dbReference>
<dbReference type="Gene3D" id="3.50.50.60">
    <property type="entry name" value="FAD/NAD(P)-binding domain"/>
    <property type="match status" value="1"/>
</dbReference>
<dbReference type="Gene3D" id="1.20.58.100">
    <property type="entry name" value="Fumarate reductase/succinate dehydrogenase flavoprotein-like, C-terminal domain"/>
    <property type="match status" value="1"/>
</dbReference>
<dbReference type="Gene3D" id="3.90.700.10">
    <property type="entry name" value="Succinate dehydrogenase/fumarate reductase flavoprotein, catalytic domain"/>
    <property type="match status" value="1"/>
</dbReference>
<dbReference type="InterPro" id="IPR003953">
    <property type="entry name" value="FAD-dep_OxRdtase_2_FAD-bd"/>
</dbReference>
<dbReference type="InterPro" id="IPR036188">
    <property type="entry name" value="FAD/NAD-bd_sf"/>
</dbReference>
<dbReference type="InterPro" id="IPR037099">
    <property type="entry name" value="Fum_R/Succ_DH_flav-like_C_sf"/>
</dbReference>
<dbReference type="InterPro" id="IPR015939">
    <property type="entry name" value="Fum_Rdtase/Succ_DH_flav-like_C"/>
</dbReference>
<dbReference type="InterPro" id="IPR005288">
    <property type="entry name" value="NadB"/>
</dbReference>
<dbReference type="InterPro" id="IPR027477">
    <property type="entry name" value="Succ_DH/fumarate_Rdtase_cat_sf"/>
</dbReference>
<dbReference type="NCBIfam" id="NF005701">
    <property type="entry name" value="PRK07512.1"/>
    <property type="match status" value="1"/>
</dbReference>
<dbReference type="PANTHER" id="PTHR42716">
    <property type="entry name" value="L-ASPARTATE OXIDASE"/>
    <property type="match status" value="1"/>
</dbReference>
<dbReference type="PANTHER" id="PTHR42716:SF2">
    <property type="entry name" value="L-ASPARTATE OXIDASE, CHLOROPLASTIC"/>
    <property type="match status" value="1"/>
</dbReference>
<dbReference type="Pfam" id="PF00890">
    <property type="entry name" value="FAD_binding_2"/>
    <property type="match status" value="1"/>
</dbReference>
<dbReference type="Pfam" id="PF02910">
    <property type="entry name" value="Succ_DH_flav_C"/>
    <property type="match status" value="1"/>
</dbReference>
<dbReference type="PRINTS" id="PR00368">
    <property type="entry name" value="FADPNR"/>
</dbReference>
<dbReference type="SUPFAM" id="SSF51905">
    <property type="entry name" value="FAD/NAD(P)-binding domain"/>
    <property type="match status" value="1"/>
</dbReference>
<dbReference type="SUPFAM" id="SSF46977">
    <property type="entry name" value="Succinate dehydrogenase/fumarate reductase flavoprotein C-terminal domain"/>
    <property type="match status" value="1"/>
</dbReference>
<dbReference type="SUPFAM" id="SSF56425">
    <property type="entry name" value="Succinate dehydrogenase/fumarate reductase flavoprotein, catalytic domain"/>
    <property type="match status" value="1"/>
</dbReference>
<keyword id="KW-0963">Cytoplasm</keyword>
<keyword id="KW-0274">FAD</keyword>
<keyword id="KW-0285">Flavoprotein</keyword>
<keyword id="KW-0547">Nucleotide-binding</keyword>
<keyword id="KW-0560">Oxidoreductase</keyword>
<keyword id="KW-0662">Pyridine nucleotide biosynthesis</keyword>
<keyword id="KW-1185">Reference proteome</keyword>